<comment type="catalytic activity">
    <reaction>
        <text>L-threonine = acetaldehyde + glycine</text>
        <dbReference type="Rhea" id="RHEA:19625"/>
        <dbReference type="ChEBI" id="CHEBI:15343"/>
        <dbReference type="ChEBI" id="CHEBI:57305"/>
        <dbReference type="ChEBI" id="CHEBI:57926"/>
        <dbReference type="EC" id="4.1.2.48"/>
    </reaction>
</comment>
<comment type="catalytic activity">
    <reaction>
        <text>L-allo-threonine = acetaldehyde + glycine</text>
        <dbReference type="Rhea" id="RHEA:26209"/>
        <dbReference type="ChEBI" id="CHEBI:15343"/>
        <dbReference type="ChEBI" id="CHEBI:57305"/>
        <dbReference type="ChEBI" id="CHEBI:58585"/>
        <dbReference type="EC" id="4.1.2.48"/>
    </reaction>
</comment>
<comment type="cofactor">
    <cofactor>
        <name>pyridoxal 5'-phosphate</name>
        <dbReference type="ChEBI" id="CHEBI:597326"/>
    </cofactor>
</comment>
<comment type="pathway">
    <text>Amino-acid degradation; L-threonine degradation via aldolase pathway; acetaldehyde and glycine from L-threonine: step 1/1.</text>
</comment>
<comment type="subunit">
    <text evidence="1">Homotetramer.</text>
</comment>
<comment type="similarity">
    <text evidence="3">Belongs to the threonine aldolase family.</text>
</comment>
<sequence>MTADEEETFTTFNEFRSDTFTVPTRAMVEDGFMNATFGDSVYQEDETTLRLESKMCEITGKPAALFCVSGTMSNQIGLRANLVQPPYSILCDYRAHVFLHEAGGLATLSQAMVHPVRPSNGNYLTFEDVLGNVTYDDDGDIHAAPTKVISLENTLHGIIIPIEEIRKISEFCRENDIRLHLDGARLWNASVATGISIKEYCSYFDSVSLCLSKSLGAPIGSVLVGDEKFIRKANHFKKQSGGGIRQAGIMSAMAIHAIDYNLSKLELSHNYAKQIGDFCQEHGIKLESPVDTSLVFLDLKANKMDPNRLVELGRTKYNVKLMGQRIACHFQLSQESVDNVKKCILECLEYHQKHPHKDDGRNNKKMYSLDAIKK</sequence>
<gene>
    <name type="primary">GLY1</name>
</gene>
<dbReference type="EC" id="4.1.2.48"/>
<dbReference type="EMBL" id="AF009967">
    <property type="protein sequence ID" value="AAB64198.1"/>
    <property type="molecule type" value="Genomic_DNA"/>
</dbReference>
<dbReference type="SMR" id="O13427"/>
<dbReference type="VEuPathDB" id="FungiDB:C1_10450W_A"/>
<dbReference type="VEuPathDB" id="FungiDB:CAWG_00388"/>
<dbReference type="BRENDA" id="4.1.2.48">
    <property type="organism ID" value="1096"/>
</dbReference>
<dbReference type="UniPathway" id="UPA00044">
    <property type="reaction ID" value="UER00429"/>
</dbReference>
<dbReference type="GO" id="GO:0005829">
    <property type="term" value="C:cytosol"/>
    <property type="evidence" value="ECO:0007669"/>
    <property type="project" value="TreeGrafter"/>
</dbReference>
<dbReference type="GO" id="GO:0008732">
    <property type="term" value="F:L-allo-threonine aldolase activity"/>
    <property type="evidence" value="ECO:0007669"/>
    <property type="project" value="TreeGrafter"/>
</dbReference>
<dbReference type="GO" id="GO:0006545">
    <property type="term" value="P:glycine biosynthetic process"/>
    <property type="evidence" value="ECO:0007669"/>
    <property type="project" value="TreeGrafter"/>
</dbReference>
<dbReference type="GO" id="GO:0006567">
    <property type="term" value="P:threonine catabolic process"/>
    <property type="evidence" value="ECO:0007669"/>
    <property type="project" value="TreeGrafter"/>
</dbReference>
<dbReference type="CDD" id="cd06502">
    <property type="entry name" value="TA_like"/>
    <property type="match status" value="1"/>
</dbReference>
<dbReference type="FunFam" id="3.40.640.10:FF:000030">
    <property type="entry name" value="Low-specificity L-threonine aldolase"/>
    <property type="match status" value="1"/>
</dbReference>
<dbReference type="Gene3D" id="3.40.640.10">
    <property type="entry name" value="Type I PLP-dependent aspartate aminotransferase-like (Major domain)"/>
    <property type="match status" value="1"/>
</dbReference>
<dbReference type="InterPro" id="IPR001597">
    <property type="entry name" value="ArAA_b-elim_lyase/Thr_aldolase"/>
</dbReference>
<dbReference type="InterPro" id="IPR023603">
    <property type="entry name" value="Low_specificity_L-TA-like"/>
</dbReference>
<dbReference type="InterPro" id="IPR015424">
    <property type="entry name" value="PyrdxlP-dep_Trfase"/>
</dbReference>
<dbReference type="InterPro" id="IPR015421">
    <property type="entry name" value="PyrdxlP-dep_Trfase_major"/>
</dbReference>
<dbReference type="NCBIfam" id="NF041359">
    <property type="entry name" value="GntG_guanitoxin"/>
    <property type="match status" value="1"/>
</dbReference>
<dbReference type="PANTHER" id="PTHR48097:SF9">
    <property type="entry name" value="L-THREONINE ALDOLASE"/>
    <property type="match status" value="1"/>
</dbReference>
<dbReference type="PANTHER" id="PTHR48097">
    <property type="entry name" value="L-THREONINE ALDOLASE-RELATED"/>
    <property type="match status" value="1"/>
</dbReference>
<dbReference type="Pfam" id="PF01212">
    <property type="entry name" value="Beta_elim_lyase"/>
    <property type="match status" value="1"/>
</dbReference>
<dbReference type="PIRSF" id="PIRSF017617">
    <property type="entry name" value="Thr_aldolase"/>
    <property type="match status" value="1"/>
</dbReference>
<dbReference type="SUPFAM" id="SSF53383">
    <property type="entry name" value="PLP-dependent transferases"/>
    <property type="match status" value="1"/>
</dbReference>
<reference key="1">
    <citation type="journal article" date="2000" name="Yeast">
        <title>Glycine metabolism in Candida albicans: characterization of the serine hydroxymethyltransferase (SHM1, SHM2) and threonine aldolase (GLY1) genes.</title>
        <authorList>
            <person name="McNeil J.B."/>
            <person name="Flynn J."/>
            <person name="Tsao N."/>
            <person name="Monschau N."/>
            <person name="Stahmann K."/>
            <person name="Haynes R.H."/>
            <person name="McIntosh E.M."/>
            <person name="Pearlman R.E."/>
        </authorList>
    </citation>
    <scope>NUCLEOTIDE SEQUENCE [GENOMIC DNA]</scope>
</reference>
<organism>
    <name type="scientific">Candida albicans</name>
    <name type="common">Yeast</name>
    <dbReference type="NCBI Taxonomy" id="5476"/>
    <lineage>
        <taxon>Eukaryota</taxon>
        <taxon>Fungi</taxon>
        <taxon>Dikarya</taxon>
        <taxon>Ascomycota</taxon>
        <taxon>Saccharomycotina</taxon>
        <taxon>Pichiomycetes</taxon>
        <taxon>Debaryomycetaceae</taxon>
        <taxon>Candida/Lodderomyces clade</taxon>
        <taxon>Candida</taxon>
    </lineage>
</organism>
<accession>O13427</accession>
<keyword id="KW-0456">Lyase</keyword>
<keyword id="KW-0663">Pyridoxal phosphate</keyword>
<protein>
    <recommendedName>
        <fullName>Low-specificity L-threonine aldolase</fullName>
        <ecNumber>4.1.2.48</ecNumber>
    </recommendedName>
</protein>
<name>GLY1_CANAX</name>
<proteinExistence type="inferred from homology"/>
<feature type="chain" id="PRO_0000121570" description="Low-specificity L-threonine aldolase">
    <location>
        <begin position="1"/>
        <end position="374"/>
    </location>
</feature>
<feature type="region of interest" description="Disordered" evidence="2">
    <location>
        <begin position="354"/>
        <end position="374"/>
    </location>
</feature>
<feature type="modified residue" description="N6-(pyridoxal phosphate)lysine" evidence="1">
    <location>
        <position position="213"/>
    </location>
</feature>
<evidence type="ECO:0000250" key="1"/>
<evidence type="ECO:0000256" key="2">
    <source>
        <dbReference type="SAM" id="MobiDB-lite"/>
    </source>
</evidence>
<evidence type="ECO:0000305" key="3"/>